<name>Y1756_STRPG</name>
<comment type="similarity">
    <text evidence="1">Belongs to the UPF0297 family.</text>
</comment>
<dbReference type="EMBL" id="AM295007">
    <property type="protein sequence ID" value="CAM31078.1"/>
    <property type="molecule type" value="Genomic_DNA"/>
</dbReference>
<dbReference type="RefSeq" id="WP_002982194.1">
    <property type="nucleotide sequence ID" value="NC_009332.1"/>
</dbReference>
<dbReference type="SMR" id="A2RGU6"/>
<dbReference type="KEGG" id="spf:SpyM51756"/>
<dbReference type="HOGENOM" id="CLU_162466_0_0_9"/>
<dbReference type="HAMAP" id="MF_01507">
    <property type="entry name" value="UPF0297"/>
    <property type="match status" value="1"/>
</dbReference>
<dbReference type="InterPro" id="IPR009309">
    <property type="entry name" value="IreB"/>
</dbReference>
<dbReference type="NCBIfam" id="NF003997">
    <property type="entry name" value="PRK05473.1"/>
    <property type="match status" value="1"/>
</dbReference>
<dbReference type="PANTHER" id="PTHR40067">
    <property type="entry name" value="UPF0297 PROTEIN YRZL"/>
    <property type="match status" value="1"/>
</dbReference>
<dbReference type="PANTHER" id="PTHR40067:SF1">
    <property type="entry name" value="UPF0297 PROTEIN YRZL"/>
    <property type="match status" value="1"/>
</dbReference>
<dbReference type="Pfam" id="PF06135">
    <property type="entry name" value="IreB"/>
    <property type="match status" value="1"/>
</dbReference>
<dbReference type="PIRSF" id="PIRSF037258">
    <property type="entry name" value="DUF965_bac"/>
    <property type="match status" value="1"/>
</dbReference>
<gene>
    <name type="ordered locus">SpyM51756</name>
</gene>
<evidence type="ECO:0000255" key="1">
    <source>
        <dbReference type="HAMAP-Rule" id="MF_01507"/>
    </source>
</evidence>
<feature type="chain" id="PRO_0000289312" description="UPF0297 protein SpyM51756">
    <location>
        <begin position="1"/>
        <end position="89"/>
    </location>
</feature>
<organism>
    <name type="scientific">Streptococcus pyogenes serotype M5 (strain Manfredo)</name>
    <dbReference type="NCBI Taxonomy" id="160491"/>
    <lineage>
        <taxon>Bacteria</taxon>
        <taxon>Bacillati</taxon>
        <taxon>Bacillota</taxon>
        <taxon>Bacilli</taxon>
        <taxon>Lactobacillales</taxon>
        <taxon>Streptococcaceae</taxon>
        <taxon>Streptococcus</taxon>
    </lineage>
</organism>
<sequence>MGFTDETVRFKLDDGDKRQISETLTAVYHSLDEKGYNPINQIVGYVLSGDPAYVPRYNDARNQIRKYERDEIVEELVRYYLQGNGIDVK</sequence>
<accession>A2RGU6</accession>
<reference key="1">
    <citation type="journal article" date="2007" name="J. Bacteriol.">
        <title>Complete genome of acute rheumatic fever-associated serotype M5 Streptococcus pyogenes strain Manfredo.</title>
        <authorList>
            <person name="Holden M.T.G."/>
            <person name="Scott A."/>
            <person name="Cherevach I."/>
            <person name="Chillingworth T."/>
            <person name="Churcher C."/>
            <person name="Cronin A."/>
            <person name="Dowd L."/>
            <person name="Feltwell T."/>
            <person name="Hamlin N."/>
            <person name="Holroyd S."/>
            <person name="Jagels K."/>
            <person name="Moule S."/>
            <person name="Mungall K."/>
            <person name="Quail M.A."/>
            <person name="Price C."/>
            <person name="Rabbinowitsch E."/>
            <person name="Sharp S."/>
            <person name="Skelton J."/>
            <person name="Whitehead S."/>
            <person name="Barrell B.G."/>
            <person name="Kehoe M."/>
            <person name="Parkhill J."/>
        </authorList>
    </citation>
    <scope>NUCLEOTIDE SEQUENCE [LARGE SCALE GENOMIC DNA]</scope>
    <source>
        <strain>Manfredo</strain>
    </source>
</reference>
<protein>
    <recommendedName>
        <fullName evidence="1">UPF0297 protein SpyM51756</fullName>
    </recommendedName>
</protein>
<proteinExistence type="inferred from homology"/>